<proteinExistence type="inferred from homology"/>
<evidence type="ECO:0000255" key="1">
    <source>
        <dbReference type="HAMAP-Rule" id="MF_00270"/>
    </source>
</evidence>
<evidence type="ECO:0000305" key="2"/>
<comment type="function">
    <text evidence="1">Binds as a heterodimer with protein bS6 to the central domain of the 16S rRNA, where it helps stabilize the platform of the 30S subunit.</text>
</comment>
<comment type="subunit">
    <text evidence="1">Part of the 30S ribosomal subunit. Forms a tight heterodimer with protein bS6.</text>
</comment>
<comment type="similarity">
    <text evidence="1">Belongs to the bacterial ribosomal protein bS18 family.</text>
</comment>
<gene>
    <name evidence="1" type="primary">rpsR</name>
    <name type="ordered locus">BCE_5623</name>
</gene>
<protein>
    <recommendedName>
        <fullName evidence="1">Small ribosomal subunit protein bS18</fullName>
    </recommendedName>
    <alternativeName>
        <fullName evidence="2">30S ribosomal protein S18</fullName>
    </alternativeName>
</protein>
<reference key="1">
    <citation type="journal article" date="2004" name="Nucleic Acids Res.">
        <title>The genome sequence of Bacillus cereus ATCC 10987 reveals metabolic adaptations and a large plasmid related to Bacillus anthracis pXO1.</title>
        <authorList>
            <person name="Rasko D.A."/>
            <person name="Ravel J."/>
            <person name="Oekstad O.A."/>
            <person name="Helgason E."/>
            <person name="Cer R.Z."/>
            <person name="Jiang L."/>
            <person name="Shores K.A."/>
            <person name="Fouts D.E."/>
            <person name="Tourasse N.J."/>
            <person name="Angiuoli S.V."/>
            <person name="Kolonay J.F."/>
            <person name="Nelson W.C."/>
            <person name="Kolstoe A.-B."/>
            <person name="Fraser C.M."/>
            <person name="Read T.D."/>
        </authorList>
    </citation>
    <scope>NUCLEOTIDE SEQUENCE [LARGE SCALE GENOMIC DNA]</scope>
    <source>
        <strain>ATCC 10987 / NRS 248</strain>
    </source>
</reference>
<accession>Q72WV5</accession>
<keyword id="KW-0687">Ribonucleoprotein</keyword>
<keyword id="KW-0689">Ribosomal protein</keyword>
<keyword id="KW-0694">RNA-binding</keyword>
<keyword id="KW-0699">rRNA-binding</keyword>
<name>RS18_BACC1</name>
<sequence>MAGRKGGRAKRRKVCFFTANGITRIDYKDVDLLKRFVSERGKILPRRVTGTSAKYQRKLTVAIKRARQMALLPYVGE</sequence>
<dbReference type="EMBL" id="AE017194">
    <property type="protein sequence ID" value="AAS44523.1"/>
    <property type="molecule type" value="Genomic_DNA"/>
</dbReference>
<dbReference type="SMR" id="Q72WV5"/>
<dbReference type="KEGG" id="bca:BCE_5623"/>
<dbReference type="HOGENOM" id="CLU_148710_2_2_9"/>
<dbReference type="Proteomes" id="UP000002527">
    <property type="component" value="Chromosome"/>
</dbReference>
<dbReference type="GO" id="GO:0022627">
    <property type="term" value="C:cytosolic small ribosomal subunit"/>
    <property type="evidence" value="ECO:0007669"/>
    <property type="project" value="TreeGrafter"/>
</dbReference>
<dbReference type="GO" id="GO:0070181">
    <property type="term" value="F:small ribosomal subunit rRNA binding"/>
    <property type="evidence" value="ECO:0007669"/>
    <property type="project" value="TreeGrafter"/>
</dbReference>
<dbReference type="GO" id="GO:0003735">
    <property type="term" value="F:structural constituent of ribosome"/>
    <property type="evidence" value="ECO:0007669"/>
    <property type="project" value="InterPro"/>
</dbReference>
<dbReference type="GO" id="GO:0006412">
    <property type="term" value="P:translation"/>
    <property type="evidence" value="ECO:0007669"/>
    <property type="project" value="UniProtKB-UniRule"/>
</dbReference>
<dbReference type="FunFam" id="4.10.640.10:FF:000003">
    <property type="entry name" value="30S ribosomal protein S18"/>
    <property type="match status" value="1"/>
</dbReference>
<dbReference type="Gene3D" id="4.10.640.10">
    <property type="entry name" value="Ribosomal protein S18"/>
    <property type="match status" value="1"/>
</dbReference>
<dbReference type="HAMAP" id="MF_00270">
    <property type="entry name" value="Ribosomal_bS18"/>
    <property type="match status" value="1"/>
</dbReference>
<dbReference type="InterPro" id="IPR001648">
    <property type="entry name" value="Ribosomal_bS18"/>
</dbReference>
<dbReference type="InterPro" id="IPR018275">
    <property type="entry name" value="Ribosomal_bS18_CS"/>
</dbReference>
<dbReference type="InterPro" id="IPR036870">
    <property type="entry name" value="Ribosomal_bS18_sf"/>
</dbReference>
<dbReference type="NCBIfam" id="TIGR00165">
    <property type="entry name" value="S18"/>
    <property type="match status" value="1"/>
</dbReference>
<dbReference type="PANTHER" id="PTHR13479">
    <property type="entry name" value="30S RIBOSOMAL PROTEIN S18"/>
    <property type="match status" value="1"/>
</dbReference>
<dbReference type="PANTHER" id="PTHR13479:SF40">
    <property type="entry name" value="SMALL RIBOSOMAL SUBUNIT PROTEIN BS18M"/>
    <property type="match status" value="1"/>
</dbReference>
<dbReference type="Pfam" id="PF01084">
    <property type="entry name" value="Ribosomal_S18"/>
    <property type="match status" value="1"/>
</dbReference>
<dbReference type="PRINTS" id="PR00974">
    <property type="entry name" value="RIBOSOMALS18"/>
</dbReference>
<dbReference type="SUPFAM" id="SSF46911">
    <property type="entry name" value="Ribosomal protein S18"/>
    <property type="match status" value="1"/>
</dbReference>
<dbReference type="PROSITE" id="PS00057">
    <property type="entry name" value="RIBOSOMAL_S18"/>
    <property type="match status" value="1"/>
</dbReference>
<feature type="chain" id="PRO_0000111109" description="Small ribosomal subunit protein bS18">
    <location>
        <begin position="1"/>
        <end position="77"/>
    </location>
</feature>
<organism>
    <name type="scientific">Bacillus cereus (strain ATCC 10987 / NRS 248)</name>
    <dbReference type="NCBI Taxonomy" id="222523"/>
    <lineage>
        <taxon>Bacteria</taxon>
        <taxon>Bacillati</taxon>
        <taxon>Bacillota</taxon>
        <taxon>Bacilli</taxon>
        <taxon>Bacillales</taxon>
        <taxon>Bacillaceae</taxon>
        <taxon>Bacillus</taxon>
        <taxon>Bacillus cereus group</taxon>
    </lineage>
</organism>